<gene>
    <name evidence="1" type="primary">purC</name>
    <name type="ordered locus">CLL_A1104</name>
</gene>
<evidence type="ECO:0000255" key="1">
    <source>
        <dbReference type="HAMAP-Rule" id="MF_00137"/>
    </source>
</evidence>
<keyword id="KW-0067">ATP-binding</keyword>
<keyword id="KW-0436">Ligase</keyword>
<keyword id="KW-0547">Nucleotide-binding</keyword>
<keyword id="KW-0658">Purine biosynthesis</keyword>
<proteinExistence type="inferred from homology"/>
<organism>
    <name type="scientific">Clostridium botulinum (strain Eklund 17B / Type B)</name>
    <dbReference type="NCBI Taxonomy" id="935198"/>
    <lineage>
        <taxon>Bacteria</taxon>
        <taxon>Bacillati</taxon>
        <taxon>Bacillota</taxon>
        <taxon>Clostridia</taxon>
        <taxon>Eubacteriales</taxon>
        <taxon>Clostridiaceae</taxon>
        <taxon>Clostridium</taxon>
    </lineage>
</organism>
<sequence length="235" mass="26605">MEKLEMLYEGKAKQIYATDKADEVVIYYKDDATAFNGEKKGQITDKGVMNNKITSILFEQLEKQGIKTHFIKKLNDREQLCKKVSIVPLEVIVRNVAAGSMAKRLGLEEGTKLKTTVFEFSYKDDELGDPLINSYHAVAIGAATFEEIDTILEMTAKINNILKEAFAKENINLIDFKIEFGKCADGTIVLADEISPDTCRFWDATTGEKLDKDRFRRDLGNVEDAYIEILKRISK</sequence>
<feature type="chain" id="PRO_1000095974" description="Phosphoribosylaminoimidazole-succinocarboxamide synthase">
    <location>
        <begin position="1"/>
        <end position="235"/>
    </location>
</feature>
<accession>B2TN72</accession>
<protein>
    <recommendedName>
        <fullName evidence="1">Phosphoribosylaminoimidazole-succinocarboxamide synthase</fullName>
        <ecNumber evidence="1">6.3.2.6</ecNumber>
    </recommendedName>
    <alternativeName>
        <fullName evidence="1">SAICAR synthetase</fullName>
    </alternativeName>
</protein>
<reference key="1">
    <citation type="submission" date="2008-04" db="EMBL/GenBank/DDBJ databases">
        <title>Complete sequence of Clostridium botulinum strain Eklund.</title>
        <authorList>
            <person name="Brinkac L.M."/>
            <person name="Brown J.L."/>
            <person name="Bruce D."/>
            <person name="Detter C."/>
            <person name="Munk C."/>
            <person name="Smith L.A."/>
            <person name="Smith T.J."/>
            <person name="Sutton G."/>
            <person name="Brettin T.S."/>
        </authorList>
    </citation>
    <scope>NUCLEOTIDE SEQUENCE [LARGE SCALE GENOMIC DNA]</scope>
    <source>
        <strain>Eklund 17B / Type B</strain>
    </source>
</reference>
<comment type="catalytic activity">
    <reaction evidence="1">
        <text>5-amino-1-(5-phospho-D-ribosyl)imidazole-4-carboxylate + L-aspartate + ATP = (2S)-2-[5-amino-1-(5-phospho-beta-D-ribosyl)imidazole-4-carboxamido]succinate + ADP + phosphate + 2 H(+)</text>
        <dbReference type="Rhea" id="RHEA:22628"/>
        <dbReference type="ChEBI" id="CHEBI:15378"/>
        <dbReference type="ChEBI" id="CHEBI:29991"/>
        <dbReference type="ChEBI" id="CHEBI:30616"/>
        <dbReference type="ChEBI" id="CHEBI:43474"/>
        <dbReference type="ChEBI" id="CHEBI:58443"/>
        <dbReference type="ChEBI" id="CHEBI:77657"/>
        <dbReference type="ChEBI" id="CHEBI:456216"/>
        <dbReference type="EC" id="6.3.2.6"/>
    </reaction>
</comment>
<comment type="pathway">
    <text evidence="1">Purine metabolism; IMP biosynthesis via de novo pathway; 5-amino-1-(5-phospho-D-ribosyl)imidazole-4-carboxamide from 5-amino-1-(5-phospho-D-ribosyl)imidazole-4-carboxylate: step 1/2.</text>
</comment>
<comment type="similarity">
    <text evidence="1">Belongs to the SAICAR synthetase family.</text>
</comment>
<dbReference type="EC" id="6.3.2.6" evidence="1"/>
<dbReference type="EMBL" id="CP001056">
    <property type="protein sequence ID" value="ACD24108.1"/>
    <property type="molecule type" value="Genomic_DNA"/>
</dbReference>
<dbReference type="SMR" id="B2TN72"/>
<dbReference type="KEGG" id="cbk:CLL_A1104"/>
<dbReference type="PATRIC" id="fig|935198.13.peg.1051"/>
<dbReference type="HOGENOM" id="CLU_061495_2_0_9"/>
<dbReference type="UniPathway" id="UPA00074">
    <property type="reaction ID" value="UER00131"/>
</dbReference>
<dbReference type="Proteomes" id="UP000001195">
    <property type="component" value="Chromosome"/>
</dbReference>
<dbReference type="GO" id="GO:0005524">
    <property type="term" value="F:ATP binding"/>
    <property type="evidence" value="ECO:0007669"/>
    <property type="project" value="UniProtKB-KW"/>
</dbReference>
<dbReference type="GO" id="GO:0004639">
    <property type="term" value="F:phosphoribosylaminoimidazolesuccinocarboxamide synthase activity"/>
    <property type="evidence" value="ECO:0007669"/>
    <property type="project" value="UniProtKB-UniRule"/>
</dbReference>
<dbReference type="GO" id="GO:0006189">
    <property type="term" value="P:'de novo' IMP biosynthetic process"/>
    <property type="evidence" value="ECO:0007669"/>
    <property type="project" value="UniProtKB-UniRule"/>
</dbReference>
<dbReference type="GO" id="GO:0009236">
    <property type="term" value="P:cobalamin biosynthetic process"/>
    <property type="evidence" value="ECO:0007669"/>
    <property type="project" value="InterPro"/>
</dbReference>
<dbReference type="CDD" id="cd01415">
    <property type="entry name" value="SAICAR_synt_PurC"/>
    <property type="match status" value="1"/>
</dbReference>
<dbReference type="FunFam" id="3.30.200.20:FF:000189">
    <property type="entry name" value="Phosphoribosylaminoimidazole-succinocarboxamide synthase"/>
    <property type="match status" value="1"/>
</dbReference>
<dbReference type="FunFam" id="3.30.470.20:FF:000006">
    <property type="entry name" value="Phosphoribosylaminoimidazole-succinocarboxamide synthase"/>
    <property type="match status" value="1"/>
</dbReference>
<dbReference type="Gene3D" id="3.30.470.20">
    <property type="entry name" value="ATP-grasp fold, B domain"/>
    <property type="match status" value="1"/>
</dbReference>
<dbReference type="Gene3D" id="3.30.200.20">
    <property type="entry name" value="Phosphorylase Kinase, domain 1"/>
    <property type="match status" value="1"/>
</dbReference>
<dbReference type="HAMAP" id="MF_00137">
    <property type="entry name" value="SAICAR_synth"/>
    <property type="match status" value="1"/>
</dbReference>
<dbReference type="InterPro" id="IPR028923">
    <property type="entry name" value="SAICAR_synt/ADE2_N"/>
</dbReference>
<dbReference type="InterPro" id="IPR033934">
    <property type="entry name" value="SAICAR_synt_PurC"/>
</dbReference>
<dbReference type="InterPro" id="IPR001636">
    <property type="entry name" value="SAICAR_synth"/>
</dbReference>
<dbReference type="InterPro" id="IPR050089">
    <property type="entry name" value="SAICAR_synthetase"/>
</dbReference>
<dbReference type="InterPro" id="IPR018236">
    <property type="entry name" value="SAICAR_synthetase_CS"/>
</dbReference>
<dbReference type="NCBIfam" id="TIGR00081">
    <property type="entry name" value="purC"/>
    <property type="match status" value="1"/>
</dbReference>
<dbReference type="PANTHER" id="PTHR43599">
    <property type="entry name" value="MULTIFUNCTIONAL PROTEIN ADE2"/>
    <property type="match status" value="1"/>
</dbReference>
<dbReference type="PANTHER" id="PTHR43599:SF3">
    <property type="entry name" value="SI:DKEY-6E2.2"/>
    <property type="match status" value="1"/>
</dbReference>
<dbReference type="Pfam" id="PF01259">
    <property type="entry name" value="SAICAR_synt"/>
    <property type="match status" value="1"/>
</dbReference>
<dbReference type="SUPFAM" id="SSF56104">
    <property type="entry name" value="SAICAR synthase-like"/>
    <property type="match status" value="1"/>
</dbReference>
<dbReference type="PROSITE" id="PS01057">
    <property type="entry name" value="SAICAR_SYNTHETASE_1"/>
    <property type="match status" value="1"/>
</dbReference>
<dbReference type="PROSITE" id="PS01058">
    <property type="entry name" value="SAICAR_SYNTHETASE_2"/>
    <property type="match status" value="1"/>
</dbReference>
<name>PUR7_CLOBB</name>